<keyword id="KW-0150">Chloroplast</keyword>
<keyword id="KW-0934">Plastid</keyword>
<keyword id="KW-0687">Ribonucleoprotein</keyword>
<keyword id="KW-0689">Ribosomal protein</keyword>
<name>RK16_PLETE</name>
<gene>
    <name evidence="1" type="primary">rpl16</name>
</gene>
<geneLocation type="chloroplast"/>
<comment type="subunit">
    <text evidence="1">Part of the 50S ribosomal subunit.</text>
</comment>
<comment type="subcellular location">
    <subcellularLocation>
        <location>Plastid</location>
        <location>Chloroplast</location>
    </subcellularLocation>
</comment>
<comment type="similarity">
    <text evidence="1">Belongs to the universal ribosomal protein uL16 family.</text>
</comment>
<feature type="chain" id="PRO_0000354642" description="Large ribosomal subunit protein uL16c">
    <location>
        <begin position="1"/>
        <end position="139"/>
    </location>
</feature>
<feature type="region of interest" description="Disordered" evidence="2">
    <location>
        <begin position="1"/>
        <end position="20"/>
    </location>
</feature>
<accession>A6YGC7</accession>
<evidence type="ECO:0000255" key="1">
    <source>
        <dbReference type="HAMAP-Rule" id="MF_01342"/>
    </source>
</evidence>
<evidence type="ECO:0000256" key="2">
    <source>
        <dbReference type="SAM" id="MobiDB-lite"/>
    </source>
</evidence>
<evidence type="ECO:0000305" key="3"/>
<protein>
    <recommendedName>
        <fullName evidence="1">Large ribosomal subunit protein uL16c</fullName>
    </recommendedName>
    <alternativeName>
        <fullName evidence="3">50S ribosomal protein L16, chloroplastic</fullName>
    </alternativeName>
</protein>
<proteinExistence type="inferred from homology"/>
<organism>
    <name type="scientific">Pleurastrum terricola</name>
    <name type="common">Filamentous green alga</name>
    <name type="synonym">Leptosira terrestris</name>
    <dbReference type="NCBI Taxonomy" id="34116"/>
    <lineage>
        <taxon>Eukaryota</taxon>
        <taxon>Viridiplantae</taxon>
        <taxon>Chlorophyta</taxon>
        <taxon>core chlorophytes</taxon>
        <taxon>Chlorophyceae</taxon>
        <taxon>CS clade</taxon>
        <taxon>Chlamydomonadales</taxon>
        <taxon>Pleurastraceae</taxon>
        <taxon>Pleurastrum</taxon>
    </lineage>
</organism>
<sequence>MLSPKRTKYRKHHRGRMKGKATRGNKIVFGDFALQALEPAWITSRQIEAGRRAMTRYARRGGKLWIRIFPDKPVTMRPAESRMGSGKGSPEYWVAVVKPGKILYEMKGVSEIIARAAMRIASYKMPIKTNFLVKSTSPN</sequence>
<dbReference type="EMBL" id="EF506945">
    <property type="protein sequence ID" value="ABO69340.1"/>
    <property type="molecule type" value="Genomic_DNA"/>
</dbReference>
<dbReference type="RefSeq" id="YP_001382204.1">
    <property type="nucleotide sequence ID" value="NC_009681.1"/>
</dbReference>
<dbReference type="SMR" id="A6YGC7"/>
<dbReference type="GeneID" id="5383811"/>
<dbReference type="GO" id="GO:0009507">
    <property type="term" value="C:chloroplast"/>
    <property type="evidence" value="ECO:0007669"/>
    <property type="project" value="UniProtKB-SubCell"/>
</dbReference>
<dbReference type="GO" id="GO:0005762">
    <property type="term" value="C:mitochondrial large ribosomal subunit"/>
    <property type="evidence" value="ECO:0007669"/>
    <property type="project" value="TreeGrafter"/>
</dbReference>
<dbReference type="GO" id="GO:0019843">
    <property type="term" value="F:rRNA binding"/>
    <property type="evidence" value="ECO:0007669"/>
    <property type="project" value="InterPro"/>
</dbReference>
<dbReference type="GO" id="GO:0003735">
    <property type="term" value="F:structural constituent of ribosome"/>
    <property type="evidence" value="ECO:0007669"/>
    <property type="project" value="InterPro"/>
</dbReference>
<dbReference type="GO" id="GO:0032543">
    <property type="term" value="P:mitochondrial translation"/>
    <property type="evidence" value="ECO:0007669"/>
    <property type="project" value="TreeGrafter"/>
</dbReference>
<dbReference type="CDD" id="cd01433">
    <property type="entry name" value="Ribosomal_L16_L10e"/>
    <property type="match status" value="1"/>
</dbReference>
<dbReference type="FunFam" id="3.90.1170.10:FF:000001">
    <property type="entry name" value="50S ribosomal protein L16"/>
    <property type="match status" value="1"/>
</dbReference>
<dbReference type="Gene3D" id="3.90.1170.10">
    <property type="entry name" value="Ribosomal protein L10e/L16"/>
    <property type="match status" value="1"/>
</dbReference>
<dbReference type="HAMAP" id="MF_01342">
    <property type="entry name" value="Ribosomal_uL16"/>
    <property type="match status" value="1"/>
</dbReference>
<dbReference type="InterPro" id="IPR047873">
    <property type="entry name" value="Ribosomal_uL16"/>
</dbReference>
<dbReference type="InterPro" id="IPR000114">
    <property type="entry name" value="Ribosomal_uL16_bact-type"/>
</dbReference>
<dbReference type="InterPro" id="IPR020798">
    <property type="entry name" value="Ribosomal_uL16_CS"/>
</dbReference>
<dbReference type="InterPro" id="IPR016180">
    <property type="entry name" value="Ribosomal_uL16_dom"/>
</dbReference>
<dbReference type="InterPro" id="IPR036920">
    <property type="entry name" value="Ribosomal_uL16_sf"/>
</dbReference>
<dbReference type="NCBIfam" id="TIGR01164">
    <property type="entry name" value="rplP_bact"/>
    <property type="match status" value="1"/>
</dbReference>
<dbReference type="PANTHER" id="PTHR12220">
    <property type="entry name" value="50S/60S RIBOSOMAL PROTEIN L16"/>
    <property type="match status" value="1"/>
</dbReference>
<dbReference type="PANTHER" id="PTHR12220:SF13">
    <property type="entry name" value="LARGE RIBOSOMAL SUBUNIT PROTEIN UL16M"/>
    <property type="match status" value="1"/>
</dbReference>
<dbReference type="Pfam" id="PF00252">
    <property type="entry name" value="Ribosomal_L16"/>
    <property type="match status" value="1"/>
</dbReference>
<dbReference type="PRINTS" id="PR00060">
    <property type="entry name" value="RIBOSOMALL16"/>
</dbReference>
<dbReference type="SUPFAM" id="SSF54686">
    <property type="entry name" value="Ribosomal protein L16p/L10e"/>
    <property type="match status" value="1"/>
</dbReference>
<dbReference type="PROSITE" id="PS00586">
    <property type="entry name" value="RIBOSOMAL_L16_1"/>
    <property type="match status" value="1"/>
</dbReference>
<dbReference type="PROSITE" id="PS00701">
    <property type="entry name" value="RIBOSOMAL_L16_2"/>
    <property type="match status" value="1"/>
</dbReference>
<reference key="1">
    <citation type="journal article" date="2007" name="BMC Genomics">
        <title>The chloroplast genome sequence of the green alga Leptosira terrestris: multiple losses of the inverted repeat and extensive genome rearrangements within the Trebouxiophyceae.</title>
        <authorList>
            <person name="de Cambiaire J.-C."/>
            <person name="Otis C."/>
            <person name="Turmel M."/>
            <person name="Lemieux C."/>
        </authorList>
    </citation>
    <scope>NUCLEOTIDE SEQUENCE [LARGE SCALE GENOMIC DNA]</scope>
    <source>
        <strain>CCAP 463/2 / UTEX 333</strain>
    </source>
</reference>